<organism>
    <name type="scientific">Homo sapiens</name>
    <name type="common">Human</name>
    <dbReference type="NCBI Taxonomy" id="9606"/>
    <lineage>
        <taxon>Eukaryota</taxon>
        <taxon>Metazoa</taxon>
        <taxon>Chordata</taxon>
        <taxon>Craniata</taxon>
        <taxon>Vertebrata</taxon>
        <taxon>Euteleostomi</taxon>
        <taxon>Mammalia</taxon>
        <taxon>Eutheria</taxon>
        <taxon>Euarchontoglires</taxon>
        <taxon>Primates</taxon>
        <taxon>Haplorrhini</taxon>
        <taxon>Catarrhini</taxon>
        <taxon>Hominidae</taxon>
        <taxon>Homo</taxon>
    </lineage>
</organism>
<feature type="initiator methionine" description="Removed" evidence="29">
    <location>
        <position position="1"/>
    </location>
</feature>
<feature type="chain" id="PRO_0000094433" description="Chloride channel protein 2">
    <location>
        <begin position="2"/>
        <end position="898"/>
    </location>
</feature>
<feature type="topological domain" description="Cytoplasmic" evidence="1">
    <location>
        <begin position="2"/>
        <end position="87"/>
    </location>
</feature>
<feature type="transmembrane region" description="Helical" evidence="1">
    <location>
        <begin position="88"/>
        <end position="121"/>
    </location>
</feature>
<feature type="transmembrane region" description="Helical" evidence="1">
    <location>
        <begin position="130"/>
        <end position="155"/>
    </location>
</feature>
<feature type="intramembrane region" description="Helical" evidence="5">
    <location>
        <begin position="164"/>
        <end position="171"/>
    </location>
</feature>
<feature type="transmembrane region" description="Helical" evidence="1">
    <location>
        <begin position="180"/>
        <end position="198"/>
    </location>
</feature>
<feature type="transmembrane region" description="Helical" evidence="1">
    <location>
        <begin position="205"/>
        <end position="223"/>
    </location>
</feature>
<feature type="intramembrane region" description="Helical" evidence="1">
    <location>
        <begin position="239"/>
        <end position="251"/>
    </location>
</feature>
<feature type="intramembrane region" description="Helical" evidence="1">
    <location>
        <begin position="255"/>
        <end position="263"/>
    </location>
</feature>
<feature type="transmembrane region" description="Helical" evidence="1">
    <location>
        <begin position="275"/>
        <end position="295"/>
    </location>
</feature>
<feature type="transmembrane region" description="Helical" evidence="1">
    <location>
        <begin position="321"/>
        <end position="349"/>
    </location>
</feature>
<feature type="transmembrane region" description="Helical" evidence="1">
    <location>
        <begin position="358"/>
        <end position="377"/>
    </location>
</feature>
<feature type="transmembrane region" description="Helical" evidence="1">
    <location>
        <begin position="429"/>
        <end position="449"/>
    </location>
</feature>
<feature type="transmembrane region" description="Helical" evidence="1">
    <location>
        <begin position="457"/>
        <end position="480"/>
    </location>
</feature>
<feature type="intramembrane region" description="Helical" evidence="1">
    <location>
        <begin position="497"/>
        <end position="511"/>
    </location>
</feature>
<feature type="intramembrane region" description="Note=Loop between two helices" evidence="1">
    <location>
        <begin position="512"/>
        <end position="513"/>
    </location>
</feature>
<feature type="intramembrane region" description="Helical" evidence="1">
    <location>
        <begin position="514"/>
        <end position="525"/>
    </location>
</feature>
<feature type="intramembrane region" description="Note=Loop between two helices" evidence="1">
    <location>
        <begin position="526"/>
        <end position="530"/>
    </location>
</feature>
<feature type="transmembrane region" description="Helical" evidence="1">
    <location>
        <begin position="531"/>
        <end position="548"/>
    </location>
</feature>
<feature type="topological domain" description="Cytoplasmic" evidence="1">
    <location>
        <begin position="549"/>
        <end position="898"/>
    </location>
</feature>
<feature type="domain" description="CBS 1" evidence="6">
    <location>
        <begin position="584"/>
        <end position="642"/>
    </location>
</feature>
<feature type="domain" description="CBS 2" evidence="6">
    <location>
        <begin position="790"/>
        <end position="850"/>
    </location>
</feature>
<feature type="region of interest" description="Essential for channel gating by both voltage and cell volume" evidence="2 22">
    <location>
        <begin position="16"/>
        <end position="34"/>
    </location>
</feature>
<feature type="region of interest" description="Modulates channel gating by both voltage and cell volume" evidence="2">
    <location>
        <begin position="36"/>
        <end position="49"/>
    </location>
</feature>
<feature type="region of interest" description="Disordered" evidence="7">
    <location>
        <begin position="643"/>
        <end position="672"/>
    </location>
</feature>
<feature type="region of interest" description="Disordered" evidence="7">
    <location>
        <begin position="686"/>
        <end position="717"/>
    </location>
</feature>
<feature type="region of interest" description="Disordered" evidence="7">
    <location>
        <begin position="856"/>
        <end position="898"/>
    </location>
</feature>
<feature type="short sequence motif" description="Selectivity filter part_1" evidence="1">
    <location>
        <begin position="161"/>
        <end position="165"/>
    </location>
</feature>
<feature type="short sequence motif" description="Selectivity filter part_2" evidence="1">
    <location>
        <begin position="203"/>
        <end position="207"/>
    </location>
</feature>
<feature type="short sequence motif" description="Selectivity filter part_3" evidence="1">
    <location>
        <begin position="457"/>
        <end position="461"/>
    </location>
</feature>
<feature type="short sequence motif" description="Basolateral membrane sorting" evidence="10">
    <location>
        <begin position="812"/>
        <end position="813"/>
    </location>
</feature>
<feature type="compositionally biased region" description="Polar residues" evidence="7">
    <location>
        <begin position="705"/>
        <end position="717"/>
    </location>
</feature>
<feature type="binding site" evidence="1">
    <location>
        <position position="162"/>
    </location>
    <ligand>
        <name>chloride</name>
        <dbReference type="ChEBI" id="CHEBI:17996"/>
    </ligand>
</feature>
<feature type="binding site" evidence="1">
    <location>
        <position position="459"/>
    </location>
    <ligand>
        <name>chloride</name>
        <dbReference type="ChEBI" id="CHEBI:17996"/>
    </ligand>
</feature>
<feature type="binding site" evidence="1">
    <location>
        <position position="553"/>
    </location>
    <ligand>
        <name>chloride</name>
        <dbReference type="ChEBI" id="CHEBI:17996"/>
    </ligand>
</feature>
<feature type="site" description="Protopore gate" evidence="22">
    <location>
        <position position="205"/>
    </location>
</feature>
<feature type="site" description="Couples extracellular acidification to the channel closure" evidence="4">
    <location>
        <position position="530"/>
    </location>
</feature>
<feature type="modified residue" description="N-acetylalanine" evidence="29">
    <location>
        <position position="2"/>
    </location>
</feature>
<feature type="modified residue" description="Phosphothreonine" evidence="3">
    <location>
        <position position="20"/>
    </location>
</feature>
<feature type="modified residue" description="Phosphoserine" evidence="30">
    <location>
        <position position="712"/>
    </location>
</feature>
<feature type="modified residue" description="Phosphoserine" evidence="2">
    <location>
        <position position="758"/>
    </location>
</feature>
<feature type="splice variant" id="VSP_007831" description="In isoform 2." evidence="25">
    <location>
        <begin position="1"/>
        <end position="359"/>
    </location>
</feature>
<feature type="splice variant" id="VSP_045457" description="In isoform 4." evidence="24">
    <location>
        <begin position="74"/>
        <end position="117"/>
    </location>
</feature>
<feature type="splice variant" id="VSP_007832" description="In isoform 2." evidence="25">
    <original>FWMSALATTIPVPCGAFMPVFVIGAAFGRLVGESMAAWFPDGI</original>
    <variation>HLGVWWVKAWLPGSQMEFIRTAAPTGLCLGATLWSGQLRWQER</variation>
    <location>
        <begin position="443"/>
        <end position="485"/>
    </location>
</feature>
<feature type="splice variant" id="VSP_036456" description="In isoform 3." evidence="25">
    <location>
        <begin position="466"/>
        <end position="482"/>
    </location>
</feature>
<feature type="splice variant" id="VSP_036455" description="In isoform 2." evidence="25">
    <location>
        <begin position="486"/>
        <end position="898"/>
    </location>
</feature>
<feature type="splice variant" id="VSP_045458" description="In isoform 5." evidence="24">
    <location>
        <begin position="806"/>
        <end position="834"/>
    </location>
</feature>
<feature type="sequence variant" id="VAR_081154" description="In HALD2; increased voltage-gated chloride currents due to higher channel open probabilities at physiological cell membrane potentials; dbSNP:rs758379595." evidence="19">
    <original>M</original>
    <variation>K</variation>
    <location>
        <position position="22"/>
    </location>
</feature>
<feature type="sequence variant" id="VAR_081155" description="In HALD2; increased voltage-gated chloride currents; increased aldosterone synthase expression; dbSNP:rs1085307938." evidence="20">
    <original>G</original>
    <variation>D</variation>
    <location>
        <position position="24"/>
    </location>
</feature>
<feature type="sequence variant" id="VAR_081156" description="In HALD2; increased voltage-gated chloride currents due to higher channel open probabilitiesat at physiological cell membrane potentials; dbSNP:rs1553857113." evidence="19">
    <original>Y</original>
    <variation>N</variation>
    <location>
        <position position="26"/>
    </location>
</feature>
<feature type="sequence variant" id="VAR_057886" description="Reduces channel activity; dbSNP:rs115661422." evidence="12">
    <original>P</original>
    <variation>R</variation>
    <location>
        <position position="48"/>
    </location>
</feature>
<feature type="sequence variant" id="VAR_057887" description="Reduces channel activity; dbSNP:rs61729156." evidence="12">
    <original>R</original>
    <variation>H</variation>
    <location>
        <position position="68"/>
    </location>
</feature>
<feature type="sequence variant" id="VAR_070976" description="In LKPAT; loss of function mutation; the mutant protein is restricted to the endoplasmic reticulum and hardly reached the plasma membrane; lower amounts of the mutant protein compared to wild-type." evidence="18">
    <location>
        <begin position="144"/>
        <end position="145"/>
    </location>
</feature>
<feature type="sequence variant" id="VAR_081157" description="In HALD2; increased voltage-gated chloride currents due to higher channel open probabilities at physiological cell membrane potentials; increased aldosterone synthase expression; dbSNP:rs1293789661." evidence="19">
    <original>R</original>
    <variation>Q</variation>
    <location>
        <position position="172"/>
    </location>
</feature>
<feature type="sequence variant" id="VAR_057888" description="No effect; dbSNP:rs863225248." evidence="12">
    <original>G</original>
    <variation>A</variation>
    <location>
        <position position="199"/>
    </location>
</feature>
<feature type="sequence variant" id="VAR_057889" description="In EJM8; associated with disease susceptibility; the mutant channel has accelerated deactivation rates compared to wild-type, but normal activation and peak current; dbSNP:rs71318369." evidence="13">
    <original>R</original>
    <variation>Q</variation>
    <location>
        <position position="235"/>
    </location>
</feature>
<feature type="sequence variant" id="VAR_081158" description="In HALD2; increased voltage-gated chloride currents due to higher channel open probabilities at physiological cell membrane potentials." evidence="19">
    <location>
        <position position="362"/>
    </location>
</feature>
<feature type="sequence variant" id="VAR_070977" description="In LKPAT; loss of function mutation; the mutant protein is restricted to the endoplasmic reticulum and hardly reaches the plasma membrane; lower amounts of the mutant protein compared to wild-type; dbSNP:rs587777111." evidence="18">
    <original>A</original>
    <variation>V</variation>
    <location>
        <position position="500"/>
    </location>
</feature>
<feature type="sequence variant" id="VAR_057890" description="In EIG11; associated with disease susceptibility; the mutant channel has accelerated deactivation rates compared to wild-type, but normal activation and peak current; has accelerated ATP-dependent common gating; dbSNP:rs137852682." evidence="13 17">
    <original>R</original>
    <variation>Q</variation>
    <location>
        <position position="577"/>
    </location>
</feature>
<feature type="sequence variant" id="VAR_057891" description="No effect; dbSNP:rs148545588." evidence="13">
    <original>R</original>
    <variation>C</variation>
    <location>
        <position position="644"/>
    </location>
</feature>
<feature type="sequence variant" id="VAR_057892" description="Reduces channel activity; dbSNP:rs115961753." evidence="12">
    <original>R</original>
    <variation>Q</variation>
    <location>
        <position position="646"/>
    </location>
</feature>
<feature type="sequence variant" id="VAR_089242" description="Found in a patient with idiopathic generalized epilepsy; has accelerated ATP-dependent common gating; dbSNP:rs568335048." evidence="17">
    <original>R</original>
    <variation>T</variation>
    <location>
        <position position="653"/>
    </location>
</feature>
<feature type="sequence variant" id="VAR_054550" description="In dbSNP:rs9820367." evidence="9 12 23">
    <original>T</original>
    <variation>S</variation>
    <location>
        <position position="668"/>
    </location>
</feature>
<feature type="sequence variant" id="VAR_089243" description="Found in patiens with leukodystrophy and epilepsy; does not affect the channel conductance; does not affect ATP-dependent common gating.; dbSNP:rs111656822." evidence="11 17">
    <original>R</original>
    <variation>Q</variation>
    <location>
        <position position="688"/>
    </location>
</feature>
<feature type="sequence variant" id="VAR_015989" description="In JAE2; uncertain significance; has accelerated ATP-dependent common gating; dbSNP:rs137852681." evidence="15 17">
    <original>G</original>
    <variation>E</variation>
    <location>
        <position position="715"/>
    </location>
</feature>
<feature type="sequence variant" id="VAR_054551" description="Found in patiens with leukodystrophy and epilepsy; does not affect the channel conductance; does not affect ATP-dependent common gating.; dbSNP:rs2228292." evidence="11 17">
    <original>E</original>
    <variation>D</variation>
    <location>
        <position position="718"/>
    </location>
</feature>
<feature type="sequence variant" id="VAR_058426" description="Found in a patient with childhood absence epilepsy; uncertain significance; dbSNP:rs138573287." evidence="14">
    <original>S</original>
    <variation>L</variation>
    <location>
        <position position="719"/>
    </location>
</feature>
<feature type="sequence variant" id="VAR_057893" description="Slightly faster channel activation; dbSNP:rs114702742." evidence="12">
    <original>R</original>
    <variation>W</variation>
    <location>
        <position position="725"/>
    </location>
</feature>
<feature type="sequence variant" id="VAR_057894" description="Slightly faster channel activation; dbSNP:rs144164281." evidence="12">
    <original>R</original>
    <variation>H</variation>
    <location>
        <position position="747"/>
    </location>
</feature>
<feature type="sequence variant" id="VAR_088252" description="In LKPAT; decreased voltage-gated chloride channel activity; does not affect protein expression; does not affect localization at the cell membrane." evidence="21">
    <location>
        <begin position="753"/>
        <end position="898"/>
    </location>
</feature>
<feature type="sequence variant" id="VAR_081159" description="In HALD2; increased voltage-gated chloride currents due to higher channel open probabilities at physiological cell membrane potentials; dbSNP:rs1553853557." evidence="19">
    <original>S</original>
    <variation>R</variation>
    <location>
        <position position="865"/>
    </location>
</feature>
<feature type="mutagenesis site" description="Results in larger currents, faster activation kinetics and less rectification." evidence="22">
    <location>
        <begin position="14"/>
        <end position="28"/>
    </location>
</feature>
<feature type="mutagenesis site" description="Missorted to apical membrane of epithelial cells; when associated with A-813." evidence="10">
    <original>L</original>
    <variation>A</variation>
    <location>
        <position position="812"/>
    </location>
</feature>
<feature type="mutagenesis site" description="Missorted to apical membrane of epithelial cells; when associated with A-812." evidence="10">
    <original>L</original>
    <variation>A</variation>
    <location>
        <position position="813"/>
    </location>
</feature>
<feature type="sequence conflict" description="In Ref. 1; AAB34722." evidence="27" ref="1">
    <original>Y</original>
    <variation>H</variation>
    <location>
        <position position="17"/>
    </location>
</feature>
<feature type="sequence conflict" description="In Ref. 5; AAH21578." evidence="27" ref="5">
    <original>A</original>
    <variation>V</variation>
    <location>
        <position position="537"/>
    </location>
</feature>
<feature type="strand" evidence="33">
    <location>
        <begin position="15"/>
        <end position="18"/>
    </location>
</feature>
<feature type="strand" evidence="33">
    <location>
        <begin position="21"/>
        <end position="23"/>
    </location>
</feature>
<feature type="strand" evidence="33">
    <location>
        <begin position="25"/>
        <end position="27"/>
    </location>
</feature>
<feature type="helix" evidence="33">
    <location>
        <begin position="89"/>
        <end position="125"/>
    </location>
</feature>
<feature type="turn" evidence="31">
    <location>
        <begin position="126"/>
        <end position="128"/>
    </location>
</feature>
<feature type="helix" evidence="33">
    <location>
        <begin position="130"/>
        <end position="155"/>
    </location>
</feature>
<feature type="helix" evidence="33">
    <location>
        <begin position="157"/>
        <end position="159"/>
    </location>
</feature>
<feature type="helix" evidence="33">
    <location>
        <begin position="164"/>
        <end position="171"/>
    </location>
</feature>
<feature type="turn" evidence="33">
    <location>
        <begin position="177"/>
        <end position="180"/>
    </location>
</feature>
<feature type="helix" evidence="33">
    <location>
        <begin position="182"/>
        <end position="197"/>
    </location>
</feature>
<feature type="helix" evidence="33">
    <location>
        <begin position="205"/>
        <end position="222"/>
    </location>
</feature>
<feature type="turn" evidence="32">
    <location>
        <begin position="228"/>
        <end position="230"/>
    </location>
</feature>
<feature type="helix" evidence="33">
    <location>
        <begin position="235"/>
        <end position="252"/>
    </location>
</feature>
<feature type="helix" evidence="33">
    <location>
        <begin position="257"/>
        <end position="266"/>
    </location>
</feature>
<feature type="strand" evidence="33">
    <location>
        <begin position="268"/>
        <end position="271"/>
    </location>
</feature>
<feature type="helix" evidence="33">
    <location>
        <begin position="272"/>
        <end position="295"/>
    </location>
</feature>
<feature type="strand" evidence="31">
    <location>
        <begin position="298"/>
        <end position="302"/>
    </location>
</feature>
<feature type="strand" evidence="34">
    <location>
        <begin position="312"/>
        <end position="314"/>
    </location>
</feature>
<feature type="helix" evidence="33">
    <location>
        <begin position="318"/>
        <end position="320"/>
    </location>
</feature>
<feature type="helix" evidence="33">
    <location>
        <begin position="321"/>
        <end position="351"/>
    </location>
</feature>
<feature type="helix" evidence="33">
    <location>
        <begin position="353"/>
        <end position="361"/>
    </location>
</feature>
<feature type="helix" evidence="33">
    <location>
        <begin position="362"/>
        <end position="364"/>
    </location>
</feature>
<feature type="helix" evidence="33">
    <location>
        <begin position="365"/>
        <end position="378"/>
    </location>
</feature>
<feature type="turn" evidence="33">
    <location>
        <begin position="380"/>
        <end position="382"/>
    </location>
</feature>
<feature type="helix" evidence="33">
    <location>
        <begin position="383"/>
        <end position="387"/>
    </location>
</feature>
<feature type="turn" evidence="33">
    <location>
        <begin position="388"/>
        <end position="390"/>
    </location>
</feature>
<feature type="helix" evidence="33">
    <location>
        <begin position="393"/>
        <end position="400"/>
    </location>
</feature>
<feature type="turn" evidence="31">
    <location>
        <begin position="407"/>
        <end position="410"/>
    </location>
</feature>
<feature type="strand" evidence="31">
    <location>
        <begin position="414"/>
        <end position="416"/>
    </location>
</feature>
<feature type="helix" evidence="33">
    <location>
        <begin position="422"/>
        <end position="424"/>
    </location>
</feature>
<feature type="strand" evidence="31">
    <location>
        <begin position="427"/>
        <end position="429"/>
    </location>
</feature>
<feature type="helix" evidence="33">
    <location>
        <begin position="431"/>
        <end position="449"/>
    </location>
</feature>
<feature type="strand" evidence="33">
    <location>
        <begin position="452"/>
        <end position="455"/>
    </location>
</feature>
<feature type="helix" evidence="33">
    <location>
        <begin position="459"/>
        <end position="480"/>
    </location>
</feature>
<feature type="strand" evidence="34">
    <location>
        <begin position="485"/>
        <end position="488"/>
    </location>
</feature>
<feature type="strand" evidence="31">
    <location>
        <begin position="490"/>
        <end position="492"/>
    </location>
</feature>
<feature type="helix" evidence="33">
    <location>
        <begin position="496"/>
        <end position="512"/>
    </location>
</feature>
<feature type="helix" evidence="33">
    <location>
        <begin position="517"/>
        <end position="525"/>
    </location>
</feature>
<feature type="helix" evidence="33">
    <location>
        <begin position="531"/>
        <end position="546"/>
    </location>
</feature>
<feature type="helix" evidence="33">
    <location>
        <begin position="552"/>
        <end position="559"/>
    </location>
</feature>
<feature type="helix" evidence="34">
    <location>
        <begin position="573"/>
        <end position="577"/>
    </location>
</feature>
<feature type="helix" evidence="34">
    <location>
        <begin position="580"/>
        <end position="583"/>
    </location>
</feature>
<feature type="strand" evidence="34">
    <location>
        <begin position="590"/>
        <end position="592"/>
    </location>
</feature>
<feature type="helix" evidence="34">
    <location>
        <begin position="597"/>
        <end position="605"/>
    </location>
</feature>
<feature type="strand" evidence="34">
    <location>
        <begin position="609"/>
        <end position="616"/>
    </location>
</feature>
<feature type="turn" evidence="34">
    <location>
        <begin position="618"/>
        <end position="620"/>
    </location>
</feature>
<feature type="strand" evidence="34">
    <location>
        <begin position="622"/>
        <end position="628"/>
    </location>
</feature>
<feature type="helix" evidence="34">
    <location>
        <begin position="629"/>
        <end position="640"/>
    </location>
</feature>
<feature type="helix" evidence="34">
    <location>
        <begin position="775"/>
        <end position="778"/>
    </location>
</feature>
<feature type="helix" evidence="34">
    <location>
        <begin position="803"/>
        <end position="812"/>
    </location>
</feature>
<feature type="strand" evidence="34">
    <location>
        <begin position="816"/>
        <end position="831"/>
    </location>
</feature>
<feature type="helix" evidence="34">
    <location>
        <begin position="832"/>
        <end position="840"/>
    </location>
</feature>
<keyword id="KW-0002">3D-structure</keyword>
<keyword id="KW-0007">Acetylation</keyword>
<keyword id="KW-0025">Alternative splicing</keyword>
<keyword id="KW-0129">CBS domain</keyword>
<keyword id="KW-1003">Cell membrane</keyword>
<keyword id="KW-0966">Cell projection</keyword>
<keyword id="KW-0868">Chloride</keyword>
<keyword id="KW-0869">Chloride channel</keyword>
<keyword id="KW-0225">Disease variant</keyword>
<keyword id="KW-0887">Epilepsy</keyword>
<keyword id="KW-0407">Ion channel</keyword>
<keyword id="KW-0406">Ion transport</keyword>
<keyword id="KW-0472">Membrane</keyword>
<keyword id="KW-0597">Phosphoprotein</keyword>
<keyword id="KW-0628">Postsynaptic cell membrane</keyword>
<keyword id="KW-1267">Proteomics identification</keyword>
<keyword id="KW-1185">Reference proteome</keyword>
<keyword id="KW-0677">Repeat</keyword>
<keyword id="KW-0770">Synapse</keyword>
<keyword id="KW-0812">Transmembrane</keyword>
<keyword id="KW-1133">Transmembrane helix</keyword>
<keyword id="KW-0813">Transport</keyword>
<keyword id="KW-0851">Voltage-gated channel</keyword>
<evidence type="ECO:0000250" key="1"/>
<evidence type="ECO:0000250" key="2">
    <source>
        <dbReference type="UniProtKB" id="P35525"/>
    </source>
</evidence>
<evidence type="ECO:0000250" key="3">
    <source>
        <dbReference type="UniProtKB" id="Q9R0A1"/>
    </source>
</evidence>
<evidence type="ECO:0000250" key="4">
    <source>
        <dbReference type="UniProtKB" id="Q9WU45"/>
    </source>
</evidence>
<evidence type="ECO:0000255" key="5"/>
<evidence type="ECO:0000255" key="6">
    <source>
        <dbReference type="PROSITE-ProRule" id="PRU00703"/>
    </source>
</evidence>
<evidence type="ECO:0000256" key="7">
    <source>
        <dbReference type="SAM" id="MobiDB-lite"/>
    </source>
</evidence>
<evidence type="ECO:0000269" key="8">
    <source>
    </source>
</evidence>
<evidence type="ECO:0000269" key="9">
    <source>
    </source>
</evidence>
<evidence type="ECO:0000269" key="10">
    <source>
    </source>
</evidence>
<evidence type="ECO:0000269" key="11">
    <source>
    </source>
</evidence>
<evidence type="ECO:0000269" key="12">
    <source>
    </source>
</evidence>
<evidence type="ECO:0000269" key="13">
    <source>
    </source>
</evidence>
<evidence type="ECO:0000269" key="14">
    <source>
    </source>
</evidence>
<evidence type="ECO:0000269" key="15">
    <source>
    </source>
</evidence>
<evidence type="ECO:0000269" key="16">
    <source>
    </source>
</evidence>
<evidence type="ECO:0000269" key="17">
    <source>
    </source>
</evidence>
<evidence type="ECO:0000269" key="18">
    <source>
    </source>
</evidence>
<evidence type="ECO:0000269" key="19">
    <source>
    </source>
</evidence>
<evidence type="ECO:0000269" key="20">
    <source>
    </source>
</evidence>
<evidence type="ECO:0000269" key="21">
    <source>
    </source>
</evidence>
<evidence type="ECO:0000269" key="22">
    <source>
    </source>
</evidence>
<evidence type="ECO:0000269" key="23">
    <source>
    </source>
</evidence>
<evidence type="ECO:0000303" key="24">
    <source>
    </source>
</evidence>
<evidence type="ECO:0000303" key="25">
    <source>
    </source>
</evidence>
<evidence type="ECO:0000303" key="26">
    <source>
    </source>
</evidence>
<evidence type="ECO:0000305" key="27"/>
<evidence type="ECO:0000312" key="28">
    <source>
        <dbReference type="HGNC" id="HGNC:2020"/>
    </source>
</evidence>
<evidence type="ECO:0007744" key="29">
    <source>
    </source>
</evidence>
<evidence type="ECO:0007744" key="30">
    <source>
    </source>
</evidence>
<evidence type="ECO:0007829" key="31">
    <source>
        <dbReference type="PDB" id="7XJA"/>
    </source>
</evidence>
<evidence type="ECO:0007829" key="32">
    <source>
        <dbReference type="PDB" id="8TA2"/>
    </source>
</evidence>
<evidence type="ECO:0007829" key="33">
    <source>
        <dbReference type="PDB" id="8TA3"/>
    </source>
</evidence>
<evidence type="ECO:0007829" key="34">
    <source>
        <dbReference type="PDB" id="8TA4"/>
    </source>
</evidence>
<dbReference type="EMBL" id="S77770">
    <property type="protein sequence ID" value="AAB34722.2"/>
    <property type="molecule type" value="mRNA"/>
</dbReference>
<dbReference type="EMBL" id="AF026004">
    <property type="protein sequence ID" value="AAB88807.1"/>
    <property type="molecule type" value="mRNA"/>
</dbReference>
<dbReference type="EMBL" id="AK298952">
    <property type="protein sequence ID" value="BAG61051.1"/>
    <property type="molecule type" value="mRNA"/>
</dbReference>
<dbReference type="EMBL" id="AK302759">
    <property type="protein sequence ID" value="BAG63970.1"/>
    <property type="molecule type" value="mRNA"/>
</dbReference>
<dbReference type="EMBL" id="AC078797">
    <property type="status" value="NOT_ANNOTATED_CDS"/>
    <property type="molecule type" value="Genomic_DNA"/>
</dbReference>
<dbReference type="EMBL" id="BC021578">
    <property type="protein sequence ID" value="AAH21578.1"/>
    <property type="status" value="ALT_SEQ"/>
    <property type="molecule type" value="mRNA"/>
</dbReference>
<dbReference type="EMBL" id="BC072004">
    <property type="protein sequence ID" value="AAH72004.1"/>
    <property type="molecule type" value="mRNA"/>
</dbReference>
<dbReference type="CCDS" id="CCDS3263.1">
    <molecule id="P51788-1"/>
</dbReference>
<dbReference type="CCDS" id="CCDS54690.1">
    <molecule id="P51788-4"/>
</dbReference>
<dbReference type="CCDS" id="CCDS54691.1">
    <molecule id="P51788-3"/>
</dbReference>
<dbReference type="CCDS" id="CCDS54692.1">
    <molecule id="P51788-5"/>
</dbReference>
<dbReference type="RefSeq" id="NP_001164558.1">
    <molecule id="P51788-3"/>
    <property type="nucleotide sequence ID" value="NM_001171087.3"/>
</dbReference>
<dbReference type="RefSeq" id="NP_001164559.1">
    <molecule id="P51788-4"/>
    <property type="nucleotide sequence ID" value="NM_001171088.3"/>
</dbReference>
<dbReference type="RefSeq" id="NP_001164560.1">
    <molecule id="P51788-5"/>
    <property type="nucleotide sequence ID" value="NM_001171089.3"/>
</dbReference>
<dbReference type="RefSeq" id="NP_004357.3">
    <molecule id="P51788-1"/>
    <property type="nucleotide sequence ID" value="NM_004366.5"/>
</dbReference>
<dbReference type="PDB" id="7XF5">
    <property type="method" value="EM"/>
    <property type="resolution" value="3.90 A"/>
    <property type="chains" value="A/B=1-898"/>
</dbReference>
<dbReference type="PDB" id="7XJA">
    <property type="method" value="EM"/>
    <property type="resolution" value="3.50 A"/>
    <property type="chains" value="A/B=1-898"/>
</dbReference>
<dbReference type="PDB" id="8GQU">
    <property type="method" value="EM"/>
    <property type="resolution" value="3.50 A"/>
    <property type="chains" value="A/B=1-898"/>
</dbReference>
<dbReference type="PDB" id="8TA2">
    <property type="method" value="EM"/>
    <property type="resolution" value="2.74 A"/>
    <property type="chains" value="A/B=88-566"/>
</dbReference>
<dbReference type="PDB" id="8TA3">
    <property type="method" value="EM"/>
    <property type="resolution" value="2.46 A"/>
    <property type="chains" value="A/B=1-898"/>
</dbReference>
<dbReference type="PDB" id="8TA4">
    <property type="method" value="EM"/>
    <property type="resolution" value="2.75 A"/>
    <property type="chains" value="A/B=1-898"/>
</dbReference>
<dbReference type="PDB" id="8TA5">
    <property type="method" value="EM"/>
    <property type="resolution" value="2.76 A"/>
    <property type="chains" value="A/B=1-898"/>
</dbReference>
<dbReference type="PDB" id="8TA6">
    <property type="method" value="EM"/>
    <property type="resolution" value="4.03 A"/>
    <property type="chains" value="A/B=1-898"/>
</dbReference>
<dbReference type="PDBsum" id="7XF5"/>
<dbReference type="PDBsum" id="7XJA"/>
<dbReference type="PDBsum" id="8GQU"/>
<dbReference type="PDBsum" id="8TA2"/>
<dbReference type="PDBsum" id="8TA3"/>
<dbReference type="PDBsum" id="8TA4"/>
<dbReference type="PDBsum" id="8TA5"/>
<dbReference type="PDBsum" id="8TA6"/>
<dbReference type="EMDB" id="EMD-33169"/>
<dbReference type="EMDB" id="EMD-33223"/>
<dbReference type="EMDB" id="EMD-34202"/>
<dbReference type="EMDB" id="EMD-41126"/>
<dbReference type="EMDB" id="EMD-41127"/>
<dbReference type="EMDB" id="EMD-41128"/>
<dbReference type="EMDB" id="EMD-41129"/>
<dbReference type="EMDB" id="EMD-41130"/>
<dbReference type="SMR" id="P51788"/>
<dbReference type="BioGRID" id="107595">
    <property type="interactions" value="50"/>
</dbReference>
<dbReference type="CORUM" id="P51788"/>
<dbReference type="FunCoup" id="P51788">
    <property type="interactions" value="251"/>
</dbReference>
<dbReference type="IntAct" id="P51788">
    <property type="interactions" value="48"/>
</dbReference>
<dbReference type="STRING" id="9606.ENSP00000265593"/>
<dbReference type="BindingDB" id="P51788"/>
<dbReference type="ChEMBL" id="CHEMBL1628478"/>
<dbReference type="DrugBank" id="DB05514">
    <property type="generic name" value="Cobiprostone"/>
</dbReference>
<dbReference type="DrugBank" id="DB04707">
    <property type="generic name" value="Hydroxyfasudil"/>
</dbReference>
<dbReference type="DrugBank" id="DB01046">
    <property type="generic name" value="Lubiprostone"/>
</dbReference>
<dbReference type="DrugCentral" id="P51788"/>
<dbReference type="GuidetoPHARMACOLOGY" id="699"/>
<dbReference type="TCDB" id="2.A.49.2.12">
    <property type="family name" value="the chloride carrier/channel (clc) family"/>
</dbReference>
<dbReference type="GlyGen" id="P51788">
    <property type="glycosylation" value="2 sites, 1 N-linked glycan (1 site)"/>
</dbReference>
<dbReference type="iPTMnet" id="P51788"/>
<dbReference type="PhosphoSitePlus" id="P51788"/>
<dbReference type="SwissPalm" id="P51788"/>
<dbReference type="BioMuta" id="CLCN2"/>
<dbReference type="DMDM" id="288558807"/>
<dbReference type="jPOST" id="P51788"/>
<dbReference type="MassIVE" id="P51788"/>
<dbReference type="PaxDb" id="9606-ENSP00000265593"/>
<dbReference type="PeptideAtlas" id="P51788"/>
<dbReference type="ProteomicsDB" id="19203"/>
<dbReference type="ProteomicsDB" id="19425"/>
<dbReference type="ProteomicsDB" id="56385">
    <molecule id="P51788-1"/>
</dbReference>
<dbReference type="ProteomicsDB" id="56387">
    <molecule id="P51788-3"/>
</dbReference>
<dbReference type="Antibodypedia" id="2994">
    <property type="antibodies" value="306 antibodies from 35 providers"/>
</dbReference>
<dbReference type="DNASU" id="1181"/>
<dbReference type="Ensembl" id="ENST00000265593.9">
    <molecule id="P51788-1"/>
    <property type="protein sequence ID" value="ENSP00000265593.4"/>
    <property type="gene ID" value="ENSG00000114859.16"/>
</dbReference>
<dbReference type="Ensembl" id="ENST00000344937.11">
    <molecule id="P51788-3"/>
    <property type="protein sequence ID" value="ENSP00000345056.7"/>
    <property type="gene ID" value="ENSG00000114859.16"/>
</dbReference>
<dbReference type="Ensembl" id="ENST00000434054.6">
    <molecule id="P51788-4"/>
    <property type="protein sequence ID" value="ENSP00000400425.2"/>
    <property type="gene ID" value="ENSG00000114859.16"/>
</dbReference>
<dbReference type="Ensembl" id="ENST00000457512.1">
    <molecule id="P51788-5"/>
    <property type="protein sequence ID" value="ENSP00000391928.1"/>
    <property type="gene ID" value="ENSG00000114859.16"/>
</dbReference>
<dbReference type="GeneID" id="1181"/>
<dbReference type="KEGG" id="hsa:1181"/>
<dbReference type="MANE-Select" id="ENST00000265593.9">
    <property type="protein sequence ID" value="ENSP00000265593.4"/>
    <property type="RefSeq nucleotide sequence ID" value="NM_004366.6"/>
    <property type="RefSeq protein sequence ID" value="NP_004357.3"/>
</dbReference>
<dbReference type="UCSC" id="uc003foi.4">
    <molecule id="P51788-1"/>
    <property type="organism name" value="human"/>
</dbReference>
<dbReference type="AGR" id="HGNC:2020"/>
<dbReference type="CTD" id="1181"/>
<dbReference type="DisGeNET" id="1181"/>
<dbReference type="GeneCards" id="CLCN2"/>
<dbReference type="GeneReviews" id="CLCN2"/>
<dbReference type="HGNC" id="HGNC:2020">
    <property type="gene designation" value="CLCN2"/>
</dbReference>
<dbReference type="HPA" id="ENSG00000114859">
    <property type="expression patterns" value="Tissue enhanced (intestine)"/>
</dbReference>
<dbReference type="MalaCards" id="CLCN2"/>
<dbReference type="MIM" id="600570">
    <property type="type" value="gene"/>
</dbReference>
<dbReference type="MIM" id="605635">
    <property type="type" value="phenotype"/>
</dbReference>
<dbReference type="MIM" id="607628">
    <property type="type" value="phenotype"/>
</dbReference>
<dbReference type="MIM" id="615651">
    <property type="type" value="phenotype"/>
</dbReference>
<dbReference type="neXtProt" id="NX_P51788"/>
<dbReference type="OpenTargets" id="ENSG00000114859"/>
<dbReference type="Orphanet" id="404">
    <property type="disease" value="Familial hyperaldosteronism type II"/>
</dbReference>
<dbReference type="Orphanet" id="307">
    <property type="disease" value="Juvenile myoclonic epilepsy"/>
</dbReference>
<dbReference type="Orphanet" id="363540">
    <property type="disease" value="Leukoencephalopathy with mild cerebellar ataxia and white matter edema"/>
</dbReference>
<dbReference type="PharmGKB" id="PA26547"/>
<dbReference type="VEuPathDB" id="HostDB:ENSG00000114859"/>
<dbReference type="eggNOG" id="KOG0476">
    <property type="taxonomic scope" value="Eukaryota"/>
</dbReference>
<dbReference type="GeneTree" id="ENSGT00940000155439"/>
<dbReference type="HOGENOM" id="CLU_006904_0_1_1"/>
<dbReference type="InParanoid" id="P51788"/>
<dbReference type="OMA" id="ACFMFNN"/>
<dbReference type="OrthoDB" id="4564at2759"/>
<dbReference type="PAN-GO" id="P51788">
    <property type="GO annotations" value="3 GO annotations based on evolutionary models"/>
</dbReference>
<dbReference type="PhylomeDB" id="P51788"/>
<dbReference type="TreeFam" id="TF300522"/>
<dbReference type="PathwayCommons" id="P51788"/>
<dbReference type="Reactome" id="R-HSA-2672351">
    <property type="pathway name" value="Stimuli-sensing channels"/>
</dbReference>
<dbReference type="SignaLink" id="P51788"/>
<dbReference type="BioGRID-ORCS" id="1181">
    <property type="hits" value="9 hits in 1165 CRISPR screens"/>
</dbReference>
<dbReference type="ChiTaRS" id="CLCN2">
    <property type="organism name" value="human"/>
</dbReference>
<dbReference type="GeneWiki" id="CLCN2"/>
<dbReference type="GenomeRNAi" id="1181"/>
<dbReference type="Pharos" id="P51788">
    <property type="development level" value="Tclin"/>
</dbReference>
<dbReference type="PRO" id="PR:P51788"/>
<dbReference type="Proteomes" id="UP000005640">
    <property type="component" value="Chromosome 3"/>
</dbReference>
<dbReference type="RNAct" id="P51788">
    <property type="molecule type" value="protein"/>
</dbReference>
<dbReference type="Bgee" id="ENSG00000114859">
    <property type="expression patterns" value="Expressed in mucosa of transverse colon and 108 other cell types or tissues"/>
</dbReference>
<dbReference type="ExpressionAtlas" id="P51788">
    <property type="expression patterns" value="baseline and differential"/>
</dbReference>
<dbReference type="GO" id="GO:0097450">
    <property type="term" value="C:astrocyte end-foot"/>
    <property type="evidence" value="ECO:0000314"/>
    <property type="project" value="UniProtKB"/>
</dbReference>
<dbReference type="GO" id="GO:0043194">
    <property type="term" value="C:axon initial segment"/>
    <property type="evidence" value="ECO:0007669"/>
    <property type="project" value="Ensembl"/>
</dbReference>
<dbReference type="GO" id="GO:0016323">
    <property type="term" value="C:basolateral plasma membrane"/>
    <property type="evidence" value="ECO:0000314"/>
    <property type="project" value="UniProtKB"/>
</dbReference>
<dbReference type="GO" id="GO:0034707">
    <property type="term" value="C:chloride channel complex"/>
    <property type="evidence" value="ECO:0007669"/>
    <property type="project" value="UniProtKB-KW"/>
</dbReference>
<dbReference type="GO" id="GO:0032591">
    <property type="term" value="C:dendritic spine membrane"/>
    <property type="evidence" value="ECO:0007669"/>
    <property type="project" value="UniProtKB-SubCell"/>
</dbReference>
<dbReference type="GO" id="GO:0043209">
    <property type="term" value="C:myelin sheath"/>
    <property type="evidence" value="ECO:0000314"/>
    <property type="project" value="UniProtKB"/>
</dbReference>
<dbReference type="GO" id="GO:0043204">
    <property type="term" value="C:perikaryon"/>
    <property type="evidence" value="ECO:0007669"/>
    <property type="project" value="Ensembl"/>
</dbReference>
<dbReference type="GO" id="GO:0005886">
    <property type="term" value="C:plasma membrane"/>
    <property type="evidence" value="ECO:0000314"/>
    <property type="project" value="UniProtKB"/>
</dbReference>
<dbReference type="GO" id="GO:0045211">
    <property type="term" value="C:postsynaptic membrane"/>
    <property type="evidence" value="ECO:0007669"/>
    <property type="project" value="UniProtKB-KW"/>
</dbReference>
<dbReference type="GO" id="GO:0017081">
    <property type="term" value="F:chloride channel regulator activity"/>
    <property type="evidence" value="ECO:0000315"/>
    <property type="project" value="DisProt"/>
</dbReference>
<dbReference type="GO" id="GO:0005247">
    <property type="term" value="F:voltage-gated chloride channel activity"/>
    <property type="evidence" value="ECO:0000314"/>
    <property type="project" value="UniProtKB"/>
</dbReference>
<dbReference type="GO" id="GO:0072320">
    <property type="term" value="F:volume-sensitive chloride channel activity"/>
    <property type="evidence" value="ECO:0007669"/>
    <property type="project" value="Ensembl"/>
</dbReference>
<dbReference type="GO" id="GO:0090425">
    <property type="term" value="P:acinar cell differentiation"/>
    <property type="evidence" value="ECO:0007669"/>
    <property type="project" value="Ensembl"/>
</dbReference>
<dbReference type="GO" id="GO:0060689">
    <property type="term" value="P:cell differentiation involved in salivary gland development"/>
    <property type="evidence" value="ECO:0007669"/>
    <property type="project" value="Ensembl"/>
</dbReference>
<dbReference type="GO" id="GO:0071476">
    <property type="term" value="P:cellular hypotonic response"/>
    <property type="evidence" value="ECO:0007669"/>
    <property type="project" value="Ensembl"/>
</dbReference>
<dbReference type="GO" id="GO:0006821">
    <property type="term" value="P:chloride transport"/>
    <property type="evidence" value="ECO:0000318"/>
    <property type="project" value="GO_Central"/>
</dbReference>
<dbReference type="GO" id="GO:0030324">
    <property type="term" value="P:lung development"/>
    <property type="evidence" value="ECO:0007669"/>
    <property type="project" value="Ensembl"/>
</dbReference>
<dbReference type="GO" id="GO:0006911">
    <property type="term" value="P:phagocytosis, engulfment"/>
    <property type="evidence" value="ECO:0000315"/>
    <property type="project" value="UniProtKB"/>
</dbReference>
<dbReference type="GO" id="GO:0048714">
    <property type="term" value="P:positive regulation of oligodendrocyte differentiation"/>
    <property type="evidence" value="ECO:0007669"/>
    <property type="project" value="Ensembl"/>
</dbReference>
<dbReference type="GO" id="GO:0032347">
    <property type="term" value="P:regulation of aldosterone biosynthetic process"/>
    <property type="evidence" value="ECO:0000315"/>
    <property type="project" value="UniProtKB"/>
</dbReference>
<dbReference type="GO" id="GO:0098902">
    <property type="term" value="P:regulation of membrane depolarization during action potential"/>
    <property type="evidence" value="ECO:0007669"/>
    <property type="project" value="Ensembl"/>
</dbReference>
<dbReference type="GO" id="GO:0060075">
    <property type="term" value="P:regulation of resting membrane potential"/>
    <property type="evidence" value="ECO:0007669"/>
    <property type="project" value="Ensembl"/>
</dbReference>
<dbReference type="GO" id="GO:0060041">
    <property type="term" value="P:retina development in camera-type eye"/>
    <property type="evidence" value="ECO:0007669"/>
    <property type="project" value="Ensembl"/>
</dbReference>
<dbReference type="GO" id="GO:0030322">
    <property type="term" value="P:stabilization of membrane potential"/>
    <property type="evidence" value="ECO:0007669"/>
    <property type="project" value="Ensembl"/>
</dbReference>
<dbReference type="CDD" id="cd04591">
    <property type="entry name" value="CBS_pair_voltage-gated_CLC_euk_bac"/>
    <property type="match status" value="1"/>
</dbReference>
<dbReference type="CDD" id="cd03683">
    <property type="entry name" value="ClC_1_like"/>
    <property type="match status" value="1"/>
</dbReference>
<dbReference type="FunFam" id="1.10.3080.10:FF:000002">
    <property type="entry name" value="Chloride channel 2c"/>
    <property type="match status" value="1"/>
</dbReference>
<dbReference type="FunFam" id="3.10.580.10:FF:000024">
    <property type="entry name" value="Chloride channel 2c"/>
    <property type="match status" value="1"/>
</dbReference>
<dbReference type="FunFam" id="3.10.580.10:FF:000019">
    <property type="entry name" value="Chloride voltage-gated channel 2"/>
    <property type="match status" value="1"/>
</dbReference>
<dbReference type="Gene3D" id="3.10.580.10">
    <property type="entry name" value="CBS-domain"/>
    <property type="match status" value="2"/>
</dbReference>
<dbReference type="Gene3D" id="1.10.3080.10">
    <property type="entry name" value="Clc chloride channel"/>
    <property type="match status" value="1"/>
</dbReference>
<dbReference type="InterPro" id="IPR046342">
    <property type="entry name" value="CBS_dom_sf"/>
</dbReference>
<dbReference type="InterPro" id="IPR002244">
    <property type="entry name" value="Cl-channel-2"/>
</dbReference>
<dbReference type="InterPro" id="IPR014743">
    <property type="entry name" value="Cl-channel_core"/>
</dbReference>
<dbReference type="InterPro" id="IPR050970">
    <property type="entry name" value="Cl_channel_volt-gated"/>
</dbReference>
<dbReference type="InterPro" id="IPR001807">
    <property type="entry name" value="ClC"/>
</dbReference>
<dbReference type="PANTHER" id="PTHR45720">
    <property type="entry name" value="CHLORIDE CHANNEL PROTEIN 2"/>
    <property type="match status" value="1"/>
</dbReference>
<dbReference type="PANTHER" id="PTHR45720:SF6">
    <property type="entry name" value="CHLORIDE CHANNEL PROTEIN 2"/>
    <property type="match status" value="1"/>
</dbReference>
<dbReference type="Pfam" id="PF00654">
    <property type="entry name" value="Voltage_CLC"/>
    <property type="match status" value="1"/>
</dbReference>
<dbReference type="PRINTS" id="PR00762">
    <property type="entry name" value="CLCHANNEL"/>
</dbReference>
<dbReference type="PRINTS" id="PR01113">
    <property type="entry name" value="CLCHANNEL2"/>
</dbReference>
<dbReference type="SUPFAM" id="SSF54631">
    <property type="entry name" value="CBS-domain pair"/>
    <property type="match status" value="1"/>
</dbReference>
<dbReference type="SUPFAM" id="SSF81340">
    <property type="entry name" value="Clc chloride channel"/>
    <property type="match status" value="1"/>
</dbReference>
<dbReference type="PROSITE" id="PS51371">
    <property type="entry name" value="CBS"/>
    <property type="match status" value="2"/>
</dbReference>
<comment type="function">
    <text evidence="2 3 10 11 13 16 17 18 19 20 21 22">Voltage-gated and osmosensitive chloride channel. Forms a homodimeric channel where each subunit has its own ion conduction pathway. Conducts double-barreled currents controlled by two types of gates, two fast glutamate gates that control each subunit independently and a slow common gate that opens and shuts off both subunits simultaneously. Displays inward rectification currents activated upon membrane hyperpolarization and extracellular hypotonicity (PubMed:16155254, PubMed:17567819, PubMed:19191339, PubMed:23632988, PubMed:29403011, PubMed:29403012, PubMed:36964785, PubMed:38345841). Contributes to chloride conductance involved in neuron excitability. In hippocampal neurons, generates a significant part of resting membrane conductance and provides an additional chloride efflux pathway to prevent chloride accumulation in dendrites upon GABA receptor activation. In glia, associates with the auxiliary subunit HEPACAM/GlialCAM at astrocytic processes and myelinated fiber tracts where it may regulate transcellular chloride flux buffering extracellular chloride and potassium concentrations (PubMed:19191339, PubMed:22405205, PubMed:23707145). Regulates aldosterone production in adrenal glands. The opening of CLCN2 channels at hyperpolarized membrane potentials in the glomerulosa causes cell membrane depolarization, activation of voltage-gated calcium channels and increased expression of aldosterone synthase, the rate-limiting enzyme for aldosterone biosynthesis (PubMed:29403011, PubMed:29403012). Contributes to chloride conductance in retinal pigment epithelium involved in phagocytosis of shed photoreceptor outer segments and photoreceptor renewal (PubMed:36964785). Conducts chloride currents at the basolateral membrane of epithelial cells with a role in chloride reabsorption rather than secretion (By similarity) (PubMed:16155254). Permeable to small monovalent anions with chloride &gt; thiocyanate &gt; bromide &gt; nitrate &gt; iodide ion selectivity (By similarity) (PubMed:29403012).</text>
</comment>
<comment type="catalytic activity">
    <reaction evidence="13 19 20 21 22">
        <text>chloride(in) = chloride(out)</text>
        <dbReference type="Rhea" id="RHEA:29823"/>
        <dbReference type="ChEBI" id="CHEBI:17996"/>
    </reaction>
</comment>
<comment type="catalytic activity">
    <reaction evidence="3">
        <text>thiocyanate(in) = thiocyanate(out)</text>
        <dbReference type="Rhea" id="RHEA:75347"/>
        <dbReference type="ChEBI" id="CHEBI:18022"/>
    </reaction>
</comment>
<comment type="catalytic activity">
    <reaction evidence="2 3">
        <text>bromide(in) = bromide(out)</text>
        <dbReference type="Rhea" id="RHEA:75383"/>
        <dbReference type="ChEBI" id="CHEBI:15858"/>
    </reaction>
</comment>
<comment type="catalytic activity">
    <reaction evidence="2">
        <text>nitrate(in) = nitrate(out)</text>
        <dbReference type="Rhea" id="RHEA:34923"/>
        <dbReference type="ChEBI" id="CHEBI:17632"/>
    </reaction>
</comment>
<comment type="catalytic activity">
    <reaction evidence="20">
        <text>iodide(out) = iodide(in)</text>
        <dbReference type="Rhea" id="RHEA:66324"/>
        <dbReference type="ChEBI" id="CHEBI:16382"/>
    </reaction>
</comment>
<comment type="activity regulation">
    <text evidence="2 3 4 17 22">Common gate kinetics are down-regulated by intracellular ATP (PubMed:23632988). Inhibited by AK-42, a derivative of meclofenamate (PubMed:38345841). Inhibited by Cd(2+) (By similarity). Inhibited by Zn(2+) and PKC activation (By similarity). Inhibited at acidic pH (By similarity). CCLN2:HEPACAM channel conductance is up-regulated upon hypo-osmolarity (By similarity).</text>
</comment>
<comment type="subunit">
    <text evidence="16 22">Homodimer (PubMed:38345841). Interacts with auxiliary subunit HEPACAM (PubMed:22405205).</text>
</comment>
<comment type="interaction">
    <interactant intactId="EBI-16431116">
        <id>P51788-4</id>
    </interactant>
    <interactant intactId="EBI-10173939">
        <id>Q9UMX0-2</id>
        <label>UBQLN1</label>
    </interactant>
    <organismsDiffer>false</organismsDiffer>
    <experiments>3</experiments>
</comment>
<comment type="subcellular location">
    <subcellularLocation>
        <location evidence="16 18 19 21 22">Cell membrane</location>
        <topology evidence="5">Multi-pass membrane protein</topology>
    </subcellularLocation>
    <subcellularLocation>
        <location evidence="10">Basolateral cell membrane</location>
        <topology evidence="5">Multi-pass membrane protein</topology>
    </subcellularLocation>
    <subcellularLocation>
        <location evidence="2">Cell projection</location>
        <location evidence="2">Dendritic spine membrane</location>
        <topology evidence="5">Multi-pass membrane protein</topology>
    </subcellularLocation>
    <subcellularLocation>
        <location evidence="2">Cell projection</location>
        <location evidence="2">Axon</location>
    </subcellularLocation>
    <text evidence="2 3 10 16 18">Sorting to the basolateral membrane is mediated by AP-1 clathrin adapter (PubMed:16155254). Localizes at axon initial segments and dendritic shaft and spikes. Colocalizes with HEPACAM and GFAP at astrocyte end-foot in contact with brain capillaries and other glial cells (By similarity) (PubMed:22405205, PubMed:23707145).</text>
</comment>
<comment type="alternative products">
    <event type="alternative splicing"/>
    <isoform>
        <id>P51788-1</id>
        <name>1</name>
        <sequence type="displayed"/>
    </isoform>
    <isoform>
        <id>P51788-2</id>
        <name>2</name>
        <sequence type="described" ref="VSP_007831 VSP_007832 VSP_036455"/>
    </isoform>
    <isoform>
        <id>P51788-3</id>
        <name>3</name>
        <sequence type="described" ref="VSP_036456"/>
    </isoform>
    <isoform>
        <id>P51788-4</id>
        <name>4</name>
        <sequence type="described" ref="VSP_045457"/>
    </isoform>
    <isoform>
        <id>P51788-5</id>
        <name>5</name>
        <sequence type="described" ref="VSP_045458"/>
    </isoform>
</comment>
<comment type="tissue specificity">
    <text evidence="8 18 19">Ubiquitously expressed. Moderately expressed in aortic and coronary vascular smooth muscle cells and expressed at a low level in aortic endothelial cells. Expressed in the adrenal gland, predominantly in the zona glomerulosa (PubMed:29403011). Expressed in white mater perivascular astrocytes and ependymal cells (at protein level).</text>
</comment>
<comment type="PTM">
    <text evidence="2">Phosphorylated. Activated by dephosphorylation.</text>
</comment>
<comment type="disease" evidence="13 17">
    <disease id="DI-00469">
        <name>Epilepsy, idiopathic generalized 11</name>
        <acronym>EIG11</acronym>
        <description>A disorder characterized by recurring generalized seizures in the absence of detectable brain lesions and/or metabolic abnormalities. Generalized seizures arise diffusely and simultaneously from both hemispheres of the brain.</description>
        <dbReference type="MIM" id="607628"/>
    </disease>
    <text>Disease susceptibility is associated with variants affecting the gene represented in this entry.</text>
</comment>
<comment type="disease" evidence="15 17">
    <disease id="DI-02591">
        <name>Juvenile absence epilepsy 2</name>
        <acronym>JAE2</acronym>
        <description>A subtype of idiopathic generalized epilepsy characterized by onset occurring around puberty, absence seizures, generalized tonic-clonic seizures (GTCS), GTCS on awakening, and myoclonic seizures.</description>
        <dbReference type="MIM" id="607628"/>
    </disease>
    <text>Disease susceptibility may be associated with variants affecting the gene represented in this entry.</text>
</comment>
<comment type="disease" evidence="13">
    <disease id="DI-02592">
        <name>Juvenile myoclonic epilepsy 8</name>
        <acronym>EJM8</acronym>
        <description>A subtype of idiopathic generalized epilepsy. Patients have afebrile seizures only, with onset in adolescence (rather than in childhood) and myoclonic jerks which usually occur after awakening and are triggered by sleep deprivation and fatigue.</description>
        <dbReference type="MIM" id="607628"/>
    </disease>
    <text>Disease susceptibility is associated with variants affecting the gene represented in this entry.</text>
</comment>
<comment type="disease" evidence="18 21">
    <disease id="DI-04040">
        <name>Leukoencephalopathy with ataxia</name>
        <acronym>LKPAT</acronym>
        <description>An autosomal recessive neurologic disorder with a characteristic pattern of white matter abnormalities on brain MRI. Affected individuals have prominent signal abnormalities and decreased apparent diffusion coefficient values in the posterior limbs of the internal capsules, middle cerebral peduncles, pyramidal tracts in the pons, and middle cerebellar peduncles, suggesting myelin microvacuolation. Clinical features include ataxia and unstable gait. More variable abnormalities may include visual field defects, headaches, and learning disabilities.</description>
        <dbReference type="MIM" id="615651"/>
    </disease>
    <text>The disease is caused by variants affecting the gene represented in this entry.</text>
</comment>
<comment type="disease" evidence="19 20">
    <disease id="DI-05322">
        <name>Hyperaldosteronism, familial, 2</name>
        <acronym>HALD2</acronym>
        <description>An autosomal dominant disorder characterized by elevated plasma aldosterone level and hypertension of varying severity even within members of the same family. Hypokalemia is observed in some patients. In HALD2, hypertension does not improve with glucocorticoid treatment.</description>
        <dbReference type="MIM" id="605635"/>
    </disease>
    <text>The disease is caused by variants affecting the gene represented in this entry.</text>
</comment>
<comment type="miscellaneous">
    <molecule>Isoform 2</molecule>
    <text evidence="27">May be produced at very low levels due to a premature stop codon in the mRNA, leading to nonsense-mediated mRNA decay.</text>
</comment>
<comment type="similarity">
    <text evidence="27">Belongs to the chloride channel (TC 2.A.49) family. ClC-2/CLCN2 subfamily.</text>
</comment>
<comment type="sequence caution" evidence="27">
    <conflict type="erroneous translation">
        <sequence resource="EMBL-CDS" id="AAH21578"/>
    </conflict>
    <text>Wrong choice of frame.</text>
</comment>
<sequence>MAAAAAEEGMEPRALQYEQTLMYGRYTQDLGAFAKEEAARIRLGGPEPWKGPPSSRAAPELLEYGRSRCARCRVCSVRCHKFLVSRVGEDWIFLVLLGLLMALVSWVMDYAIAACLQAQQWMSRGLNTSILLQYLAWVTYPVVLITFSAGFTQILAPQAVGSGIPEMKTILRGVVLKEYLTLKTFIAKVIGLTCALGSGMPLGKEGPFVHIASMCAALLSKFLSLFGGIYENESRNTEMLAAACAVGVGCCFAAPIGGVLFSIEVTSTFFAVRNYWRGFFAATFSAFIFRVLAVWNRDEETITALFKTRFRLDFPFDLQELPAFAVIGIASGFGGALFVYLNRKIVQVMRKQKTINRFLMRKRLLFPALVTLLISTLTFPPGFGQFMAGQLSQKETLVTLFDNRTWVRQGLVEELEPPSTSQAWNPPRANVFLTLVIFILMKFWMSALATTIPVPCGAFMPVFVIGAAFGRLVGESMAAWFPDGIHTDSSTYRIVPGGYAVVGAAALAGAVTHTVSTAVIVFELTGQIAHILPVMIAVILANAVAQSLQPSLYDSIIRIKKLPYLPELGWGRHQQYRVRVEDIMVRDVPHVALSCTFRDLRLALHRTKGRMLALVESPESMILLGSIERSQVVALLGAQLSPARRRQHMQERRATQTSPLSDQEGPPTPEASVCFQVNTEDSAFPAARGETHKPLKPALKRGPSVTRNLGESPTGSAESAGIALRSLFCGSPPPEAASEKLESCEKRKLKRVRISLASDADLEGEMSPEEILEWEEQQLDEPVNFSDCKIDPAPFQLVERTSLHKTHTIFSLLGVDHAYVTSIGRLIGIVTLKELRKAIEGSVTAQGVKVRPPLASFRDSATSSSDTETTEVHALWGPHSRHGLPREGSPSDSDDKCQ</sequence>
<protein>
    <recommendedName>
        <fullName>Chloride channel protein 2</fullName>
        <shortName>ClC-2</shortName>
    </recommendedName>
</protein>
<accession>P51788</accession>
<accession>B4DQT9</accession>
<accession>B4DZ58</accession>
<accession>E9PBD9</accession>
<accession>E9PCD2</accession>
<accession>O14864</accession>
<accession>Q6IPA9</accession>
<accession>Q8WU13</accession>
<reference key="1">
    <citation type="journal article" date="1995" name="Hum. Mol. Genet.">
        <title>Cloning of a putative human voltage-gated chloride channel (ClC-2) cDNA widely expressed in human tissues.</title>
        <authorList>
            <person name="Cid L.P."/>
            <person name="Montrose-Rafizadeh C."/>
            <person name="Smith D.I."/>
            <person name="Guggino W.B."/>
            <person name="Cutting G.R."/>
        </authorList>
    </citation>
    <scope>NUCLEOTIDE SEQUENCE [MRNA] (ISOFORM 1)</scope>
    <scope>VARIANT SER-668</scope>
    <source>
        <tissue>Placenta</tissue>
    </source>
</reference>
<reference key="2">
    <citation type="submission" date="1997-09" db="EMBL/GenBank/DDBJ databases">
        <authorList>
            <person name="Rae J.L."/>
            <person name="Shepard A.R."/>
        </authorList>
    </citation>
    <scope>NUCLEOTIDE SEQUENCE [MRNA] (ISOFORM 1)</scope>
    <source>
        <tissue>Lens epithelium</tissue>
    </source>
</reference>
<reference key="3">
    <citation type="journal article" date="2004" name="Nat. Genet.">
        <title>Complete sequencing and characterization of 21,243 full-length human cDNAs.</title>
        <authorList>
            <person name="Ota T."/>
            <person name="Suzuki Y."/>
            <person name="Nishikawa T."/>
            <person name="Otsuki T."/>
            <person name="Sugiyama T."/>
            <person name="Irie R."/>
            <person name="Wakamatsu A."/>
            <person name="Hayashi K."/>
            <person name="Sato H."/>
            <person name="Nagai K."/>
            <person name="Kimura K."/>
            <person name="Makita H."/>
            <person name="Sekine M."/>
            <person name="Obayashi M."/>
            <person name="Nishi T."/>
            <person name="Shibahara T."/>
            <person name="Tanaka T."/>
            <person name="Ishii S."/>
            <person name="Yamamoto J."/>
            <person name="Saito K."/>
            <person name="Kawai Y."/>
            <person name="Isono Y."/>
            <person name="Nakamura Y."/>
            <person name="Nagahari K."/>
            <person name="Murakami K."/>
            <person name="Yasuda T."/>
            <person name="Iwayanagi T."/>
            <person name="Wagatsuma M."/>
            <person name="Shiratori A."/>
            <person name="Sudo H."/>
            <person name="Hosoiri T."/>
            <person name="Kaku Y."/>
            <person name="Kodaira H."/>
            <person name="Kondo H."/>
            <person name="Sugawara M."/>
            <person name="Takahashi M."/>
            <person name="Kanda K."/>
            <person name="Yokoi T."/>
            <person name="Furuya T."/>
            <person name="Kikkawa E."/>
            <person name="Omura Y."/>
            <person name="Abe K."/>
            <person name="Kamihara K."/>
            <person name="Katsuta N."/>
            <person name="Sato K."/>
            <person name="Tanikawa M."/>
            <person name="Yamazaki M."/>
            <person name="Ninomiya K."/>
            <person name="Ishibashi T."/>
            <person name="Yamashita H."/>
            <person name="Murakawa K."/>
            <person name="Fujimori K."/>
            <person name="Tanai H."/>
            <person name="Kimata M."/>
            <person name="Watanabe M."/>
            <person name="Hiraoka S."/>
            <person name="Chiba Y."/>
            <person name="Ishida S."/>
            <person name="Ono Y."/>
            <person name="Takiguchi S."/>
            <person name="Watanabe S."/>
            <person name="Yosida M."/>
            <person name="Hotuta T."/>
            <person name="Kusano J."/>
            <person name="Kanehori K."/>
            <person name="Takahashi-Fujii A."/>
            <person name="Hara H."/>
            <person name="Tanase T.-O."/>
            <person name="Nomura Y."/>
            <person name="Togiya S."/>
            <person name="Komai F."/>
            <person name="Hara R."/>
            <person name="Takeuchi K."/>
            <person name="Arita M."/>
            <person name="Imose N."/>
            <person name="Musashino K."/>
            <person name="Yuuki H."/>
            <person name="Oshima A."/>
            <person name="Sasaki N."/>
            <person name="Aotsuka S."/>
            <person name="Yoshikawa Y."/>
            <person name="Matsunawa H."/>
            <person name="Ichihara T."/>
            <person name="Shiohata N."/>
            <person name="Sano S."/>
            <person name="Moriya S."/>
            <person name="Momiyama H."/>
            <person name="Satoh N."/>
            <person name="Takami S."/>
            <person name="Terashima Y."/>
            <person name="Suzuki O."/>
            <person name="Nakagawa S."/>
            <person name="Senoh A."/>
            <person name="Mizoguchi H."/>
            <person name="Goto Y."/>
            <person name="Shimizu F."/>
            <person name="Wakebe H."/>
            <person name="Hishigaki H."/>
            <person name="Watanabe T."/>
            <person name="Sugiyama A."/>
            <person name="Takemoto M."/>
            <person name="Kawakami B."/>
            <person name="Yamazaki M."/>
            <person name="Watanabe K."/>
            <person name="Kumagai A."/>
            <person name="Itakura S."/>
            <person name="Fukuzumi Y."/>
            <person name="Fujimori Y."/>
            <person name="Komiyama M."/>
            <person name="Tashiro H."/>
            <person name="Tanigami A."/>
            <person name="Fujiwara T."/>
            <person name="Ono T."/>
            <person name="Yamada K."/>
            <person name="Fujii Y."/>
            <person name="Ozaki K."/>
            <person name="Hirao M."/>
            <person name="Ohmori Y."/>
            <person name="Kawabata A."/>
            <person name="Hikiji T."/>
            <person name="Kobatake N."/>
            <person name="Inagaki H."/>
            <person name="Ikema Y."/>
            <person name="Okamoto S."/>
            <person name="Okitani R."/>
            <person name="Kawakami T."/>
            <person name="Noguchi S."/>
            <person name="Itoh T."/>
            <person name="Shigeta K."/>
            <person name="Senba T."/>
            <person name="Matsumura K."/>
            <person name="Nakajima Y."/>
            <person name="Mizuno T."/>
            <person name="Morinaga M."/>
            <person name="Sasaki M."/>
            <person name="Togashi T."/>
            <person name="Oyama M."/>
            <person name="Hata H."/>
            <person name="Watanabe M."/>
            <person name="Komatsu T."/>
            <person name="Mizushima-Sugano J."/>
            <person name="Satoh T."/>
            <person name="Shirai Y."/>
            <person name="Takahashi Y."/>
            <person name="Nakagawa K."/>
            <person name="Okumura K."/>
            <person name="Nagase T."/>
            <person name="Nomura N."/>
            <person name="Kikuchi H."/>
            <person name="Masuho Y."/>
            <person name="Yamashita R."/>
            <person name="Nakai K."/>
            <person name="Yada T."/>
            <person name="Nakamura Y."/>
            <person name="Ohara O."/>
            <person name="Isogai T."/>
            <person name="Sugano S."/>
        </authorList>
    </citation>
    <scope>NUCLEOTIDE SEQUENCE [LARGE SCALE MRNA] (ISOFORMS 4 AND 5)</scope>
    <scope>VARIANT SER-668</scope>
    <source>
        <tissue>Testis</tissue>
    </source>
</reference>
<reference key="4">
    <citation type="journal article" date="2006" name="Nature">
        <title>The DNA sequence, annotation and analysis of human chromosome 3.</title>
        <authorList>
            <person name="Muzny D.M."/>
            <person name="Scherer S.E."/>
            <person name="Kaul R."/>
            <person name="Wang J."/>
            <person name="Yu J."/>
            <person name="Sudbrak R."/>
            <person name="Buhay C.J."/>
            <person name="Chen R."/>
            <person name="Cree A."/>
            <person name="Ding Y."/>
            <person name="Dugan-Rocha S."/>
            <person name="Gill R."/>
            <person name="Gunaratne P."/>
            <person name="Harris R.A."/>
            <person name="Hawes A.C."/>
            <person name="Hernandez J."/>
            <person name="Hodgson A.V."/>
            <person name="Hume J."/>
            <person name="Jackson A."/>
            <person name="Khan Z.M."/>
            <person name="Kovar-Smith C."/>
            <person name="Lewis L.R."/>
            <person name="Lozado R.J."/>
            <person name="Metzker M.L."/>
            <person name="Milosavljevic A."/>
            <person name="Miner G.R."/>
            <person name="Morgan M.B."/>
            <person name="Nazareth L.V."/>
            <person name="Scott G."/>
            <person name="Sodergren E."/>
            <person name="Song X.-Z."/>
            <person name="Steffen D."/>
            <person name="Wei S."/>
            <person name="Wheeler D.A."/>
            <person name="Wright M.W."/>
            <person name="Worley K.C."/>
            <person name="Yuan Y."/>
            <person name="Zhang Z."/>
            <person name="Adams C.Q."/>
            <person name="Ansari-Lari M.A."/>
            <person name="Ayele M."/>
            <person name="Brown M.J."/>
            <person name="Chen G."/>
            <person name="Chen Z."/>
            <person name="Clendenning J."/>
            <person name="Clerc-Blankenburg K.P."/>
            <person name="Chen R."/>
            <person name="Chen Z."/>
            <person name="Davis C."/>
            <person name="Delgado O."/>
            <person name="Dinh H.H."/>
            <person name="Dong W."/>
            <person name="Draper H."/>
            <person name="Ernst S."/>
            <person name="Fu G."/>
            <person name="Gonzalez-Garay M.L."/>
            <person name="Garcia D.K."/>
            <person name="Gillett W."/>
            <person name="Gu J."/>
            <person name="Hao B."/>
            <person name="Haugen E."/>
            <person name="Havlak P."/>
            <person name="He X."/>
            <person name="Hennig S."/>
            <person name="Hu S."/>
            <person name="Huang W."/>
            <person name="Jackson L.R."/>
            <person name="Jacob L.S."/>
            <person name="Kelly S.H."/>
            <person name="Kube M."/>
            <person name="Levy R."/>
            <person name="Li Z."/>
            <person name="Liu B."/>
            <person name="Liu J."/>
            <person name="Liu W."/>
            <person name="Lu J."/>
            <person name="Maheshwari M."/>
            <person name="Nguyen B.-V."/>
            <person name="Okwuonu G.O."/>
            <person name="Palmeiri A."/>
            <person name="Pasternak S."/>
            <person name="Perez L.M."/>
            <person name="Phelps K.A."/>
            <person name="Plopper F.J."/>
            <person name="Qiang B."/>
            <person name="Raymond C."/>
            <person name="Rodriguez R."/>
            <person name="Saenphimmachak C."/>
            <person name="Santibanez J."/>
            <person name="Shen H."/>
            <person name="Shen Y."/>
            <person name="Subramanian S."/>
            <person name="Tabor P.E."/>
            <person name="Verduzco D."/>
            <person name="Waldron L."/>
            <person name="Wang J."/>
            <person name="Wang J."/>
            <person name="Wang Q."/>
            <person name="Williams G.A."/>
            <person name="Wong G.K.-S."/>
            <person name="Yao Z."/>
            <person name="Zhang J."/>
            <person name="Zhang X."/>
            <person name="Zhao G."/>
            <person name="Zhou J."/>
            <person name="Zhou Y."/>
            <person name="Nelson D."/>
            <person name="Lehrach H."/>
            <person name="Reinhardt R."/>
            <person name="Naylor S.L."/>
            <person name="Yang H."/>
            <person name="Olson M."/>
            <person name="Weinstock G."/>
            <person name="Gibbs R.A."/>
        </authorList>
    </citation>
    <scope>NUCLEOTIDE SEQUENCE [LARGE SCALE GENOMIC DNA]</scope>
</reference>
<reference key="5">
    <citation type="journal article" date="2004" name="Genome Res.">
        <title>The status, quality, and expansion of the NIH full-length cDNA project: the Mammalian Gene Collection (MGC).</title>
        <authorList>
            <consortium name="The MGC Project Team"/>
        </authorList>
    </citation>
    <scope>NUCLEOTIDE SEQUENCE [LARGE SCALE MRNA] (ISOFORMS 2 AND 3)</scope>
    <source>
        <tissue>Lung</tissue>
        <tissue>Uterus</tissue>
    </source>
</reference>
<reference key="6">
    <citation type="journal article" date="1999" name="J. Mol. Cell. Cardiol.">
        <title>Expression of CLCN voltage-gated chloride channel genes in human blood vessels.</title>
        <authorList>
            <person name="Lamb F.S."/>
            <person name="Clayton G.H."/>
            <person name="Liu B.-X."/>
            <person name="Smith R.L."/>
            <person name="Barna T.J."/>
            <person name="Schutte B.C."/>
        </authorList>
    </citation>
    <scope>TISSUE SPECIFICITY</scope>
    <source>
        <tissue>Aortic endothelium</tissue>
        <tissue>Vascular smooth muscle</tissue>
    </source>
</reference>
<reference key="7">
    <citation type="journal article" date="2003" name="Nat. Genet.">
        <title>Mutations in CLCN2 encoding a voltage-gated chloride channel are associated with idiopathic generalized epilepsies.</title>
        <authorList>
            <person name="Haug K."/>
            <person name="Warnstedt M."/>
            <person name="Alekov A.K."/>
            <person name="Sander T."/>
            <person name="Ramirez A."/>
            <person name="Poser B."/>
            <person name="Maljevic S."/>
            <person name="Hebeisen S."/>
            <person name="Kubisch C."/>
            <person name="Rebstock J."/>
            <person name="Horvath S."/>
            <person name="Hallmann K."/>
            <person name="Dullinger J.S."/>
            <person name="Rau B."/>
            <person name="Haverkamp F."/>
            <person name="Beyenburg S."/>
            <person name="Schulz H."/>
            <person name="Janz D."/>
            <person name="Giese B."/>
            <person name="Mueller-Newen G."/>
            <person name="Propping P."/>
            <person name="Elger C.E."/>
            <person name="Fahlke C."/>
            <person name="Lerche H."/>
            <person name="Heils A."/>
        </authorList>
    </citation>
    <scope>RETRACTED PAPER</scope>
</reference>
<reference key="8">
    <citation type="journal article" date="2009" name="Nat. Genet.">
        <authorList>
            <person name="Haug K."/>
            <person name="Warnstedt M."/>
            <person name="Alekov A.K."/>
            <person name="Sander T."/>
            <person name="Ramirez A."/>
            <person name="Poser B."/>
            <person name="Maljevic S."/>
            <person name="Hebeisen S."/>
            <person name="Kubisch C."/>
            <person name="Rebstock J."/>
            <person name="Horvath S."/>
            <person name="Hallmann K."/>
            <person name="Dullinger J.S."/>
            <person name="Rau B."/>
            <person name="Haverkamp F."/>
            <person name="Beyenburg S."/>
            <person name="Schulz H."/>
            <person name="Janz D."/>
            <person name="Giese B."/>
            <person name="Mueller-Newen G."/>
            <person name="Propping P."/>
            <person name="Elger C.E."/>
            <person name="Fahlke C."/>
            <person name="Lerche H."/>
        </authorList>
    </citation>
    <scope>RETRACTION NOTICE OF PUBMED:12612585</scope>
</reference>
<reference key="9">
    <citation type="journal article" date="2005" name="J. Cell Sci.">
        <title>Basolateral localization of native ClC-2 chloride channels in absorptive intestinal epithelial cells and basolateral sorting encoded by a CBS-2 domain di-leucine motif.</title>
        <authorList>
            <person name="Pena-Muenzenmayer G."/>
            <person name="Catalan M."/>
            <person name="Cornejo I."/>
            <person name="Figueroa C.D."/>
            <person name="Melvin J.E."/>
            <person name="Niemeyer M.I."/>
            <person name="Cid L.P."/>
            <person name="Sepulveda F.V."/>
        </authorList>
    </citation>
    <scope>FUNCTION</scope>
    <scope>SUBCELLULAR LOCATION</scope>
    <scope>MOTIF</scope>
    <scope>MUTAGENESIS OF LEU-812 AND LEU-813</scope>
</reference>
<reference key="10">
    <citation type="journal article" date="2007" name="J. Neurosci.">
        <title>Leukoencephalopathy upon disruption of the chloride channel ClC-2.</title>
        <authorList>
            <person name="Blanz J."/>
            <person name="Schweizer M."/>
            <person name="Auberson M."/>
            <person name="Maier H."/>
            <person name="Muenscher A."/>
            <person name="Huebner C.A."/>
            <person name="Jentsch T.J."/>
        </authorList>
    </citation>
    <scope>FUNCTION</scope>
    <scope>CHARACTERIZATION OF VARIANTS GLN-688 AND ASP-718</scope>
</reference>
<reference key="11">
    <citation type="journal article" date="2012" name="Neuron">
        <title>GlialCAM, a protein defective in a leukodystrophy, serves as a ClC-2 Cl(-) channel auxiliary subunit.</title>
        <authorList>
            <person name="Jeworutzki E."/>
            <person name="Lopez-Hernandez T."/>
            <person name="Capdevila-Nortes X."/>
            <person name="Sirisi S."/>
            <person name="Bengtsson L."/>
            <person name="Montolio M."/>
            <person name="Zifarelli G."/>
            <person name="Arnedo T."/>
            <person name="Mueller C.S."/>
            <person name="Schulte U."/>
            <person name="Nunes V."/>
            <person name="Martinez A."/>
            <person name="Jentsch T.J."/>
            <person name="Gasull X."/>
            <person name="Pusch M."/>
            <person name="Estevez R."/>
        </authorList>
    </citation>
    <scope>FUNCTION</scope>
    <scope>INTERACTION WITH HEPACAM</scope>
    <scope>SUBCELLULAR LOCATION</scope>
</reference>
<reference key="12">
    <citation type="journal article" date="2012" name="Proc. Natl. Acad. Sci. U.S.A.">
        <title>N-terminal acetylome analyses and functional insights of the N-terminal acetyltransferase NatB.</title>
        <authorList>
            <person name="Van Damme P."/>
            <person name="Lasa M."/>
            <person name="Polevoda B."/>
            <person name="Gazquez C."/>
            <person name="Elosegui-Artola A."/>
            <person name="Kim D.S."/>
            <person name="De Juan-Pardo E."/>
            <person name="Demeyer K."/>
            <person name="Hole K."/>
            <person name="Larrea E."/>
            <person name="Timmerman E."/>
            <person name="Prieto J."/>
            <person name="Arnesen T."/>
            <person name="Sherman F."/>
            <person name="Gevaert K."/>
            <person name="Aldabe R."/>
        </authorList>
    </citation>
    <scope>ACETYLATION [LARGE SCALE ANALYSIS] AT ALA-2</scope>
    <scope>CLEAVAGE OF INITIATOR METHIONINE [LARGE SCALE ANALYSIS]</scope>
    <scope>IDENTIFICATION BY MASS SPECTROMETRY [LARGE SCALE ANALYSIS]</scope>
</reference>
<reference key="13">
    <citation type="journal article" date="2013" name="J. Proteome Res.">
        <title>Toward a comprehensive characterization of a human cancer cell phosphoproteome.</title>
        <authorList>
            <person name="Zhou H."/>
            <person name="Di Palma S."/>
            <person name="Preisinger C."/>
            <person name="Peng M."/>
            <person name="Polat A.N."/>
            <person name="Heck A.J."/>
            <person name="Mohammed S."/>
        </authorList>
    </citation>
    <scope>PHOSPHORYLATION [LARGE SCALE ANALYSIS] AT SER-712</scope>
    <scope>IDENTIFICATION BY MASS SPECTROMETRY [LARGE SCALE ANALYSIS]</scope>
    <source>
        <tissue>Cervix carcinoma</tissue>
        <tissue>Erythroleukemia</tissue>
    </source>
</reference>
<reference key="14">
    <citation type="journal article" date="2013" name="Pflugers Arch.">
        <title>Regulation of ClC-2 gating by intracellular ATP.</title>
        <authorList>
            <person name="Stoelting G."/>
            <person name="Teodorescu G."/>
            <person name="Begemann B."/>
            <person name="Schubert J."/>
            <person name="Nabbout R."/>
            <person name="Toliat M.R."/>
            <person name="Sander T."/>
            <person name="Nuernberg P."/>
            <person name="Lerche H."/>
            <person name="Fahlke C."/>
        </authorList>
    </citation>
    <scope>FUNCTION</scope>
    <scope>ACTIVITY REGULATION</scope>
    <scope>CHARACTERIZATION OF VARIANT EIG11 GLN-577</scope>
    <scope>CHARACTERIZATION OF VARIANT JAE2 GLU-715</scope>
    <scope>CHARACTERIZATION OF VARIANT THR-653</scope>
    <scope>CHARACTERIZATION OF VARIANTS GLN-688 AND ASP-718</scope>
</reference>
<reference key="15">
    <citation type="journal article" date="2018" name="Nat. Genet.">
        <title>CLCN2 chloride channel mutations in familial hyperaldosteronism type II.</title>
        <authorList>
            <person name="Scholl U.I."/>
            <person name="Stoelting G."/>
            <person name="Schewe J."/>
            <person name="Thiel A."/>
            <person name="Tan H."/>
            <person name="Nelson-Williams C."/>
            <person name="Vichot A.A."/>
            <person name="Jin S.C."/>
            <person name="Loring E."/>
            <person name="Untiet V."/>
            <person name="Yoo T."/>
            <person name="Choi J."/>
            <person name="Xu S."/>
            <person name="Wu A."/>
            <person name="Kirchner M."/>
            <person name="Mertins P."/>
            <person name="Rump L.C."/>
            <person name="Onder A.M."/>
            <person name="Gamble C."/>
            <person name="McKenney D."/>
            <person name="Lash R.W."/>
            <person name="Jones D.P."/>
            <person name="Chune G."/>
            <person name="Gagliardi P."/>
            <person name="Choi M."/>
            <person name="Gordon R."/>
            <person name="Stowasser M."/>
            <person name="Fahlke C."/>
            <person name="Lifton R.P."/>
        </authorList>
    </citation>
    <scope>FUNCTION</scope>
    <scope>TRANSPORTER ACTIVITY</scope>
    <scope>TISSUE SPECIFICITY</scope>
    <scope>SUBCELLULAR LOCATION</scope>
    <scope>INVOLVEMENT IN HALD2</scope>
    <scope>VARIANTS HALD2 LYS-22; ASN-26; GLN-172; LYS-362 DEL AND ARG-865</scope>
    <scope>CHARACTERIZATION OF VARIANTS HALD2 LYS-22; ASN-26; GLN-172; LYS-362 DEL AND ARG-865</scope>
</reference>
<reference key="16">
    <citation type="journal article" date="2018" name="Nat. Genet.">
        <title>A gain-of-function mutation in the CLCN2 chloride channel gene causes primary aldosteronism.</title>
        <authorList>
            <person name="Fernandes-Rosa F.L."/>
            <person name="Daniil G."/>
            <person name="Orozco I.J."/>
            <person name="Goeppner C."/>
            <person name="El Zein R."/>
            <person name="Jain V."/>
            <person name="Boulkroun S."/>
            <person name="Jeunemaitre X."/>
            <person name="Amar L."/>
            <person name="Lefebvre H."/>
            <person name="Schwarzmayr T."/>
            <person name="Strom T.M."/>
            <person name="Jentsch T.J."/>
            <person name="Zennaro M.C."/>
        </authorList>
    </citation>
    <scope>FUNCTION</scope>
    <scope>TRANSPORTER ACTIVITY</scope>
    <scope>INVOLVEMENT IN HALD2</scope>
    <scope>VARIANT HALD2 ASP-24</scope>
    <scope>CHARACTERIZATION OF VARIANT HALD2 ASP-24</scope>
</reference>
<reference key="17">
    <citation type="journal article" date="2024" name="Elife">
        <title>CryoEM structures of the human CLC-2 voltage-gated chloride channel reveal a ball-and-chain gating mechanism.</title>
        <authorList>
            <person name="Xu M."/>
            <person name="Neelands T."/>
            <person name="Powers A.S."/>
            <person name="Liu Y."/>
            <person name="Miller S.D."/>
            <person name="Pintilie G.D."/>
            <person name="Bois J.D."/>
            <person name="Dror R.O."/>
            <person name="Chiu W."/>
            <person name="Maduke M."/>
        </authorList>
    </citation>
    <scope>STRUCTURE BY ELECTRON MICROSCOPY (2.46 ANGSTROMS)</scope>
    <scope>SUBUNIT</scope>
    <scope>SUBCELLULAR LOCATION</scope>
    <scope>REGION</scope>
    <scope>SITE</scope>
    <scope>FUNCTION</scope>
    <scope>TRANSPORTER ACTIVITY</scope>
    <scope>ACTIVITY REGULATION</scope>
    <scope>MUTAGENESIS OF 14-ALA--GLN-28</scope>
</reference>
<reference key="18">
    <citation type="journal article" date="2007" name="Cell. Physiol. Biochem.">
        <title>Alterations in the cytoplasmic domain of CLCN2 result in altered gating kinetics.</title>
        <authorList>
            <person name="Paul J."/>
            <person name="Jeyaraj S."/>
            <person name="Huber S.M."/>
            <person name="Seebohm G."/>
            <person name="Boehmer C."/>
            <person name="Lang F."/>
            <person name="Kremsner P.G."/>
            <person name="Kun J.F.J."/>
        </authorList>
    </citation>
    <scope>VARIANTS ARG-48; HIS-68; ALA-199; GLN-646; SER-668; TRP-725 AND HIS-747</scope>
    <scope>CHARACTERIZATION OF VARIANTS ARG-48; HIS-68; ALA-199; GLN-646; TRP-725 AND HIS-747</scope>
</reference>
<reference key="19">
    <citation type="journal article" date="2009" name="Brain Res. Bull.">
        <title>Clinical and genetic familial study of a large cohort of Italian children with idiopathic epilepsy.</title>
        <authorList>
            <person name="Combi R."/>
            <person name="Grioni D."/>
            <person name="Contri M."/>
            <person name="Redaelli S."/>
            <person name="Redaelli F."/>
            <person name="Bassi M.T."/>
            <person name="Barisani D."/>
            <person name="Lavitrano M.L."/>
            <person name="Tredici G."/>
            <person name="Tenchini M.L."/>
            <person name="Bertolini M."/>
            <person name="Dalpra L."/>
        </authorList>
    </citation>
    <scope>VARIANT LEU-719</scope>
</reference>
<reference key="20">
    <citation type="journal article" date="2009" name="Nat. Genet.">
        <title>CLCN2 variants in idiopathic generalized epilepsy.</title>
        <authorList>
            <person name="Kleefuss-Lie A."/>
            <person name="Friedl W."/>
            <person name="Cichon S."/>
            <person name="Haug K."/>
            <person name="Warnstedt M."/>
            <person name="Alekov A."/>
            <person name="Sander T."/>
            <person name="Ramirez A."/>
            <person name="Poser B."/>
            <person name="Maljevic S."/>
            <person name="Hebeisen S."/>
            <person name="Kubisch C."/>
            <person name="Rebstock J."/>
            <person name="Horvath S."/>
            <person name="Hallmann K."/>
            <person name="Dullinger J.S."/>
            <person name="Rau B."/>
            <person name="Haverkamp F."/>
            <person name="Beyenburg S."/>
            <person name="Schulz H."/>
            <person name="Janz D."/>
            <person name="Giese B."/>
            <person name="Muller-Newen G."/>
            <person name="Propping P."/>
            <person name="Elger C.E."/>
            <person name="Fahlke C."/>
            <person name="Lerche H."/>
        </authorList>
    </citation>
    <scope>VARIANT JAE2 GLU-715</scope>
    <scope>POSSIBLE INVOLVEMENT IN JAE2</scope>
</reference>
<reference key="21">
    <citation type="journal article" date="2009" name="Hum. Mutat.">
        <title>Two novel CLCN2 mutations accelerating chloride channel deactivation are associated with idiopathic generalized epilepsy.</title>
        <authorList>
            <person name="Saint-Martin C."/>
            <person name="Gauvain G."/>
            <person name="Teodorescu G."/>
            <person name="Gourfinkel-An I."/>
            <person name="Fedirko E."/>
            <person name="Weber Y.G."/>
            <person name="Maljevic S."/>
            <person name="Ernst J.-P."/>
            <person name="Garcia-Olivares J."/>
            <person name="Fahlke C."/>
            <person name="Nabbout R."/>
            <person name="LeGuern E."/>
            <person name="Lerche H."/>
            <person name="Christophe Poncer J."/>
            <person name="Depienne C."/>
        </authorList>
    </citation>
    <scope>INVOLVEMENT IN EJM8</scope>
    <scope>INVOLVEMENT IN EIG11</scope>
    <scope>VARIANT EJM8 GLN-235</scope>
    <scope>VARIANT EIG11 GLN-577</scope>
    <scope>VARIANT CYS-644</scope>
    <scope>CHARACTERIZATION OF VARIANT EJM8 GLN-235</scope>
    <scope>CHARACTERIZATION OF VARIANT EIG11 GLN-577</scope>
    <scope>CHARACTERIZATION OF VARIANT CYS-644</scope>
    <scope>FUNCTION</scope>
    <scope>TRANSPORTER ACTIVITY</scope>
</reference>
<reference key="22">
    <citation type="journal article" date="2013" name="Lancet Neurol.">
        <title>Brain white matter oedema due to ClC-2 chloride channel deficiency: an observational analytical study.</title>
        <authorList>
            <person name="Depienne C."/>
            <person name="Bugiani M."/>
            <person name="Dupuits C."/>
            <person name="Galanaud D."/>
            <person name="Touitou V."/>
            <person name="Postma N."/>
            <person name="van Berkel C."/>
            <person name="Polder E."/>
            <person name="Tollard E."/>
            <person name="Darios F."/>
            <person name="Brice A."/>
            <person name="de Die-Smulders C.E."/>
            <person name="Vles J.S."/>
            <person name="Vanderver A."/>
            <person name="Uziel G."/>
            <person name="Yalcinkaya C."/>
            <person name="Frints S.G."/>
            <person name="Kalscheuer V.M."/>
            <person name="Klooster J."/>
            <person name="Kamermans M."/>
            <person name="Abbink T.E."/>
            <person name="Wolf N.I."/>
            <person name="Sedel F."/>
            <person name="van der Knaap M.S."/>
        </authorList>
    </citation>
    <scope>VARIANTS LKPAT 144-LEU-ILE-145 DEL AND VAL-500</scope>
    <scope>CHARACTERIZATION OF VARIANTS LKPAT 144-LEU-ILE-145 DEL AND VAL-500</scope>
    <scope>FUNCTION</scope>
    <scope>SUBCELLULAR LOCATION</scope>
    <scope>TISSUE SPECIFICITY</scope>
</reference>
<reference key="23">
    <citation type="journal article" date="2023" name="Hum. Genet.">
        <title>Biallelic CLCN2 mutations cause retinal degeneration by impairing retinal pigment epithelium phagocytosis and chloride channel function.</title>
        <authorList>
            <person name="Xu P."/>
            <person name="Chen Z."/>
            <person name="Ma J."/>
            <person name="Shan Y."/>
            <person name="Wang Y."/>
            <person name="Xie B."/>
            <person name="Zheng D."/>
            <person name="Guo F."/>
            <person name="Song X."/>
            <person name="Gao G."/>
            <person name="Ye K."/>
            <person name="Liu Y."/>
            <person name="Pan G."/>
            <person name="Jiang B."/>
            <person name="Peng F."/>
            <person name="Zhong X."/>
        </authorList>
    </citation>
    <scope>VARIANT LKPAT 753-ARG--GLN-898 DEL</scope>
    <scope>CHARACTERIZATION OF VARIANT LKPAT 753-ARG--GLN-898 DEL</scope>
    <scope>SUBCELLULAR LOCATION</scope>
    <scope>FUNCTION</scope>
    <scope>TRANSPORTER ACTIVITY</scope>
</reference>
<name>CLCN2_HUMAN</name>
<proteinExistence type="evidence at protein level"/>
<gene>
    <name evidence="26 28" type="primary">CLCN2</name>
</gene>